<dbReference type="EMBL" id="CP017624">
    <property type="protein sequence ID" value="AOW27187.1"/>
    <property type="molecule type" value="Genomic_DNA"/>
</dbReference>
<dbReference type="RefSeq" id="XP_722496.1">
    <property type="nucleotide sequence ID" value="XM_717403.1"/>
</dbReference>
<dbReference type="SMR" id="Q5ALY0"/>
<dbReference type="BioGRID" id="1218934">
    <property type="interactions" value="5"/>
</dbReference>
<dbReference type="FunCoup" id="Q5ALY0">
    <property type="interactions" value="581"/>
</dbReference>
<dbReference type="IntAct" id="Q5ALY0">
    <property type="interactions" value="1"/>
</dbReference>
<dbReference type="MINT" id="Q5ALY0"/>
<dbReference type="STRING" id="237561.Q5ALY0"/>
<dbReference type="EnsemblFungi" id="C2_01410C_A-T">
    <property type="protein sequence ID" value="C2_01410C_A-T-p1"/>
    <property type="gene ID" value="C2_01410C_A"/>
</dbReference>
<dbReference type="GeneID" id="3635840"/>
<dbReference type="KEGG" id="cal:CAALFM_C201410CA"/>
<dbReference type="CGD" id="CAL0000189817">
    <property type="gene designation" value="CLB2"/>
</dbReference>
<dbReference type="VEuPathDB" id="FungiDB:C2_01410C_A"/>
<dbReference type="eggNOG" id="KOG0653">
    <property type="taxonomic scope" value="Eukaryota"/>
</dbReference>
<dbReference type="HOGENOM" id="CLU_020695_11_0_1"/>
<dbReference type="InParanoid" id="Q5ALY0"/>
<dbReference type="OMA" id="DYKFIGM"/>
<dbReference type="OrthoDB" id="5590282at2759"/>
<dbReference type="PRO" id="PR:Q5ALY0"/>
<dbReference type="Proteomes" id="UP000000559">
    <property type="component" value="Chromosome 2"/>
</dbReference>
<dbReference type="GO" id="GO:0000785">
    <property type="term" value="C:chromatin"/>
    <property type="evidence" value="ECO:0007669"/>
    <property type="project" value="EnsemblFungi"/>
</dbReference>
<dbReference type="GO" id="GO:0000307">
    <property type="term" value="C:cyclin-dependent protein kinase holoenzyme complex"/>
    <property type="evidence" value="ECO:0000318"/>
    <property type="project" value="GO_Central"/>
</dbReference>
<dbReference type="GO" id="GO:0005737">
    <property type="term" value="C:cytoplasm"/>
    <property type="evidence" value="ECO:0000318"/>
    <property type="project" value="GO_Central"/>
</dbReference>
<dbReference type="GO" id="GO:0072687">
    <property type="term" value="C:meiotic spindle"/>
    <property type="evidence" value="ECO:0007669"/>
    <property type="project" value="EnsemblFungi"/>
</dbReference>
<dbReference type="GO" id="GO:0005815">
    <property type="term" value="C:microtubule organizing center"/>
    <property type="evidence" value="ECO:0000318"/>
    <property type="project" value="GO_Central"/>
</dbReference>
<dbReference type="GO" id="GO:1990023">
    <property type="term" value="C:mitotic spindle midzone"/>
    <property type="evidence" value="ECO:0007669"/>
    <property type="project" value="EnsemblFungi"/>
</dbReference>
<dbReference type="GO" id="GO:0071958">
    <property type="term" value="C:new mitotic spindle pole body"/>
    <property type="evidence" value="ECO:0007669"/>
    <property type="project" value="EnsemblFungi"/>
</dbReference>
<dbReference type="GO" id="GO:0034399">
    <property type="term" value="C:nuclear periphery"/>
    <property type="evidence" value="ECO:0007669"/>
    <property type="project" value="EnsemblFungi"/>
</dbReference>
<dbReference type="GO" id="GO:0140602">
    <property type="term" value="C:nucleolar peripheral inclusion body"/>
    <property type="evidence" value="ECO:0007669"/>
    <property type="project" value="EnsemblFungi"/>
</dbReference>
<dbReference type="GO" id="GO:0005730">
    <property type="term" value="C:nucleolus"/>
    <property type="evidence" value="ECO:0007669"/>
    <property type="project" value="EnsemblFungi"/>
</dbReference>
<dbReference type="GO" id="GO:0005654">
    <property type="term" value="C:nucleoplasm"/>
    <property type="evidence" value="ECO:0007669"/>
    <property type="project" value="EnsemblFungi"/>
</dbReference>
<dbReference type="GO" id="GO:0005634">
    <property type="term" value="C:nucleus"/>
    <property type="evidence" value="ECO:0000318"/>
    <property type="project" value="GO_Central"/>
</dbReference>
<dbReference type="GO" id="GO:0071957">
    <property type="term" value="C:old mitotic spindle pole body"/>
    <property type="evidence" value="ECO:0007669"/>
    <property type="project" value="EnsemblFungi"/>
</dbReference>
<dbReference type="GO" id="GO:0061575">
    <property type="term" value="F:cyclin-dependent protein serine/threonine kinase activator activity"/>
    <property type="evidence" value="ECO:0007669"/>
    <property type="project" value="EnsemblFungi"/>
</dbReference>
<dbReference type="GO" id="GO:0016538">
    <property type="term" value="F:cyclin-dependent protein serine/threonine kinase regulator activity"/>
    <property type="evidence" value="ECO:0000314"/>
    <property type="project" value="CGD"/>
</dbReference>
<dbReference type="GO" id="GO:0051301">
    <property type="term" value="P:cell division"/>
    <property type="evidence" value="ECO:0007669"/>
    <property type="project" value="UniProtKB-KW"/>
</dbReference>
<dbReference type="GO" id="GO:0030447">
    <property type="term" value="P:filamentous growth"/>
    <property type="evidence" value="ECO:0000315"/>
    <property type="project" value="CGD"/>
</dbReference>
<dbReference type="GO" id="GO:0000082">
    <property type="term" value="P:G1/S transition of mitotic cell cycle"/>
    <property type="evidence" value="ECO:0000318"/>
    <property type="project" value="GO_Central"/>
</dbReference>
<dbReference type="GO" id="GO:0140013">
    <property type="term" value="P:meiotic nuclear division"/>
    <property type="evidence" value="ECO:0007669"/>
    <property type="project" value="EnsemblFungi"/>
</dbReference>
<dbReference type="GO" id="GO:0075297">
    <property type="term" value="P:negative regulation of ascospore formation"/>
    <property type="evidence" value="ECO:0007669"/>
    <property type="project" value="EnsemblFungi"/>
</dbReference>
<dbReference type="GO" id="GO:0010971">
    <property type="term" value="P:positive regulation of G2/M transition of mitotic cell cycle"/>
    <property type="evidence" value="ECO:0007669"/>
    <property type="project" value="EnsemblFungi"/>
</dbReference>
<dbReference type="GO" id="GO:0140429">
    <property type="term" value="P:positive regulation of mitotic sister chromatid biorientation"/>
    <property type="evidence" value="ECO:0007669"/>
    <property type="project" value="EnsemblFungi"/>
</dbReference>
<dbReference type="GO" id="GO:0007346">
    <property type="term" value="P:regulation of mitotic cell cycle"/>
    <property type="evidence" value="ECO:0000314"/>
    <property type="project" value="CGD"/>
</dbReference>
<dbReference type="GO" id="GO:0007089">
    <property type="term" value="P:traversing start control point of mitotic cell cycle"/>
    <property type="evidence" value="ECO:0000318"/>
    <property type="project" value="GO_Central"/>
</dbReference>
<dbReference type="CDD" id="cd20512">
    <property type="entry name" value="CYCLIN_CLBs_yeast_rpt2"/>
    <property type="match status" value="1"/>
</dbReference>
<dbReference type="FunFam" id="1.10.472.10:FF:000001">
    <property type="entry name" value="G2/mitotic-specific cyclin"/>
    <property type="match status" value="1"/>
</dbReference>
<dbReference type="Gene3D" id="1.10.472.10">
    <property type="entry name" value="Cyclin-like"/>
    <property type="match status" value="2"/>
</dbReference>
<dbReference type="InterPro" id="IPR039361">
    <property type="entry name" value="Cyclin"/>
</dbReference>
<dbReference type="InterPro" id="IPR013763">
    <property type="entry name" value="Cyclin-like_dom"/>
</dbReference>
<dbReference type="InterPro" id="IPR036915">
    <property type="entry name" value="Cyclin-like_sf"/>
</dbReference>
<dbReference type="InterPro" id="IPR046965">
    <property type="entry name" value="Cyclin_A/B-like"/>
</dbReference>
<dbReference type="InterPro" id="IPR004367">
    <property type="entry name" value="Cyclin_C-dom"/>
</dbReference>
<dbReference type="InterPro" id="IPR006671">
    <property type="entry name" value="Cyclin_N"/>
</dbReference>
<dbReference type="InterPro" id="IPR048258">
    <property type="entry name" value="Cyclins_cyclin-box"/>
</dbReference>
<dbReference type="PANTHER" id="PTHR10177">
    <property type="entry name" value="CYCLINS"/>
    <property type="match status" value="1"/>
</dbReference>
<dbReference type="Pfam" id="PF02984">
    <property type="entry name" value="Cyclin_C"/>
    <property type="match status" value="1"/>
</dbReference>
<dbReference type="Pfam" id="PF00134">
    <property type="entry name" value="Cyclin_N"/>
    <property type="match status" value="1"/>
</dbReference>
<dbReference type="PIRSF" id="PIRSF001771">
    <property type="entry name" value="Cyclin_A_B_D_E"/>
    <property type="match status" value="1"/>
</dbReference>
<dbReference type="SMART" id="SM00385">
    <property type="entry name" value="CYCLIN"/>
    <property type="match status" value="2"/>
</dbReference>
<dbReference type="SMART" id="SM01332">
    <property type="entry name" value="Cyclin_C"/>
    <property type="match status" value="1"/>
</dbReference>
<dbReference type="SUPFAM" id="SSF47954">
    <property type="entry name" value="Cyclin-like"/>
    <property type="match status" value="2"/>
</dbReference>
<dbReference type="PROSITE" id="PS00292">
    <property type="entry name" value="CYCLINS"/>
    <property type="match status" value="1"/>
</dbReference>
<gene>
    <name type="primary">CLB2</name>
    <name type="synonym">CYB1</name>
    <name type="ordered locus">CAALFM_C201410CA</name>
    <name type="ORF">CaO19.1446</name>
    <name type="ORF">CaO19.9021</name>
</gene>
<sequence>MPQVTKTNNENEFRLTRSKVQHQESISTIKNTTISNSQHKQQTQQQISSPPQVSVTSSEGVSHVNTRQYLGDVSNQYITNAKPTNKRKPLGGDNAPLQKQQHRPSRPIPIASDNNNNGSTSSSSNSSNNNNNDANRLASLAVPSRLPQKRQATESSTNLVEKLRVPQPEVGERSQSYHKKSRLIDYEWQDLDEEDSDDQLMVSEYVNEIFSYYYELETRMLPDPQYLFKQTLLKPRMRSILVDWLVEMHLKFKLLPESLFLAVNVMDRFMSVEVVQIDKLQLLATAALFTAAKYEEVFSPSVKNYAYFTDGSYTPEEVVQAEKYMLTILNFDLNYPNPMNFLRRISKADDYDVQSRTLGKYLLEITIVDYKFIGMRPSLCCASAMYLARLILGKLPVWNGNLIHYSGGYRISDMRECIELMFQYLIAPIEHDEFFKKYAMRKFMRASTLCRNWAKKFQASGRDLFDERLSTHRLTLEDDDEEEEIVVAEAEE</sequence>
<evidence type="ECO:0000256" key="1">
    <source>
        <dbReference type="SAM" id="MobiDB-lite"/>
    </source>
</evidence>
<evidence type="ECO:0000269" key="2">
    <source>
    </source>
</evidence>
<evidence type="ECO:0000269" key="3">
    <source>
    </source>
</evidence>
<evidence type="ECO:0000269" key="4">
    <source>
    </source>
</evidence>
<evidence type="ECO:0000269" key="5">
    <source>
    </source>
</evidence>
<evidence type="ECO:0000269" key="6">
    <source>
    </source>
</evidence>
<evidence type="ECO:0000269" key="7">
    <source>
    </source>
</evidence>
<evidence type="ECO:0000305" key="8"/>
<protein>
    <recommendedName>
        <fullName>G2/mitotic-specific cyclin CLB2</fullName>
    </recommendedName>
</protein>
<accession>Q5ALY0</accession>
<accession>A0A1D8PGE1</accession>
<proteinExistence type="evidence at protein level"/>
<comment type="function">
    <text evidence="2 3 6">2/mitotic-specific cyclin essential for the control of the cell cycle at the G2/M (mitosis) transition. G2/M cyclins accumulate steadily during G2 and are abruptly destroyed at mitosis. Degradation is necessary for the cell to exit from mitosis. Plays a role in morphogenesis by negatively regulating polarized growth. Through binding to CDC28 regulates cytokinesis, partly by phosphorylation of the actomyosin ring component IQG1. Also involved in the phosphorylation of CDC6 and CDC54.</text>
</comment>
<comment type="induction">
    <text evidence="2 4 7">Expressed from S phase through G2 and M phases and are degraded at the end of mitosis. Expression is down-regulated by the anti-fungal agent plagiochin E (PLE).</text>
</comment>
<comment type="disruption phenotype">
    <text evidence="5">Impairs macrophage killing during infection.</text>
</comment>
<comment type="similarity">
    <text evidence="8">Belongs to the cyclin family. Cyclin AB subfamily.</text>
</comment>
<name>CG21_CANAL</name>
<reference key="1">
    <citation type="journal article" date="2004" name="Proc. Natl. Acad. Sci. U.S.A.">
        <title>The diploid genome sequence of Candida albicans.</title>
        <authorList>
            <person name="Jones T."/>
            <person name="Federspiel N.A."/>
            <person name="Chibana H."/>
            <person name="Dungan J."/>
            <person name="Kalman S."/>
            <person name="Magee B.B."/>
            <person name="Newport G."/>
            <person name="Thorstenson Y.R."/>
            <person name="Agabian N."/>
            <person name="Magee P.T."/>
            <person name="Davis R.W."/>
            <person name="Scherer S."/>
        </authorList>
    </citation>
    <scope>NUCLEOTIDE SEQUENCE [LARGE SCALE GENOMIC DNA]</scope>
    <source>
        <strain>SC5314 / ATCC MYA-2876</strain>
    </source>
</reference>
<reference key="2">
    <citation type="journal article" date="2007" name="Genome Biol.">
        <title>Assembly of the Candida albicans genome into sixteen supercontigs aligned on the eight chromosomes.</title>
        <authorList>
            <person name="van het Hoog M."/>
            <person name="Rast T.J."/>
            <person name="Martchenko M."/>
            <person name="Grindle S."/>
            <person name="Dignard D."/>
            <person name="Hogues H."/>
            <person name="Cuomo C."/>
            <person name="Berriman M."/>
            <person name="Scherer S."/>
            <person name="Magee B.B."/>
            <person name="Whiteway M."/>
            <person name="Chibana H."/>
            <person name="Nantel A."/>
            <person name="Magee P.T."/>
        </authorList>
    </citation>
    <scope>GENOME REANNOTATION</scope>
    <source>
        <strain>SC5314 / ATCC MYA-2876</strain>
    </source>
</reference>
<reference key="3">
    <citation type="journal article" date="2013" name="Genome Biol.">
        <title>Assembly of a phased diploid Candida albicans genome facilitates allele-specific measurements and provides a simple model for repeat and indel structure.</title>
        <authorList>
            <person name="Muzzey D."/>
            <person name="Schwartz K."/>
            <person name="Weissman J.S."/>
            <person name="Sherlock G."/>
        </authorList>
    </citation>
    <scope>NUCLEOTIDE SEQUENCE [LARGE SCALE GENOMIC DNA]</scope>
    <scope>GENOME REANNOTATION</scope>
    <source>
        <strain>SC5314 / ATCC MYA-2876</strain>
    </source>
</reference>
<reference key="4">
    <citation type="journal article" date="2005" name="Mol. Biol. Cell">
        <title>The mitotic cyclins Clb2p and Clb4p affect morphogenesis in Candida albicans.</title>
        <authorList>
            <person name="Bensen E.S."/>
            <person name="Clemente-Blanco A."/>
            <person name="Finley K.R."/>
            <person name="Correa-Bordes J."/>
            <person name="Berman J."/>
        </authorList>
    </citation>
    <scope>INDUCTION</scope>
    <scope>FUNCTION</scope>
</reference>
<reference key="5">
    <citation type="journal article" date="2008" name="EMBO J.">
        <title>The IQGAP Iqg1 is a regulatory target of CDK for cytokinesis in Candida albicans.</title>
        <authorList>
            <person name="Li C.R."/>
            <person name="Wang Y.M."/>
            <person name="Wang Y."/>
        </authorList>
    </citation>
    <scope>INTERACTION WITH CDC28 AND IQG1</scope>
    <scope>FUNCTION</scope>
</reference>
<reference key="6">
    <citation type="journal article" date="2010" name="Biochim. Biophys. Acta">
        <title>Plagiochin E, an antifungal active macrocyclic bis(bibenzyl), induced apoptosis in Candida albicans through a metacaspase-dependent apoptotic pathway.</title>
        <authorList>
            <person name="Wu X.Z."/>
            <person name="Chang W.Q."/>
            <person name="Cheng A.X."/>
            <person name="Sun L.M."/>
            <person name="Lou H.X."/>
        </authorList>
    </citation>
    <scope>INDUCTION</scope>
</reference>
<reference key="7">
    <citation type="journal article" date="2010" name="Eukaryot. Cell">
        <title>Candida albicans cyclin Clb4 carries S-phase cyclin activity.</title>
        <authorList>
            <person name="Ofir A."/>
            <person name="Kornitzer D."/>
        </authorList>
    </citation>
    <scope>FUNCTION</scope>
</reference>
<reference key="8">
    <citation type="journal article" date="2010" name="Infect. Immun.">
        <title>Contribution of Candida albicans cell wall components to recognition by and escape from murine macrophages.</title>
        <authorList>
            <person name="McKenzie C.G."/>
            <person name="Koser U."/>
            <person name="Lewis L.E."/>
            <person name="Bain J.M."/>
            <person name="Mora-Montes H.M."/>
            <person name="Barker R.N."/>
            <person name="Gow N.A."/>
            <person name="Erwig L.P."/>
        </authorList>
    </citation>
    <scope>DISRUPTION PHENOTYPE</scope>
</reference>
<reference key="9">
    <citation type="journal article" date="2012" name="Mol. Biol. Cell">
        <title>Cdc28 provides a molecular link between Hsp90, morphogenesis, and cell cycle progression in Candida albicans.</title>
        <authorList>
            <person name="Senn H."/>
            <person name="Shapiro R.S."/>
            <person name="Cowen L.E."/>
        </authorList>
    </citation>
    <scope>INDUCTION</scope>
</reference>
<keyword id="KW-0131">Cell cycle</keyword>
<keyword id="KW-0132">Cell division</keyword>
<keyword id="KW-0195">Cyclin</keyword>
<keyword id="KW-0498">Mitosis</keyword>
<keyword id="KW-1185">Reference proteome</keyword>
<organism>
    <name type="scientific">Candida albicans (strain SC5314 / ATCC MYA-2876)</name>
    <name type="common">Yeast</name>
    <dbReference type="NCBI Taxonomy" id="237561"/>
    <lineage>
        <taxon>Eukaryota</taxon>
        <taxon>Fungi</taxon>
        <taxon>Dikarya</taxon>
        <taxon>Ascomycota</taxon>
        <taxon>Saccharomycotina</taxon>
        <taxon>Pichiomycetes</taxon>
        <taxon>Debaryomycetaceae</taxon>
        <taxon>Candida/Lodderomyces clade</taxon>
        <taxon>Candida</taxon>
    </lineage>
</organism>
<feature type="chain" id="PRO_0000424365" description="G2/mitotic-specific cyclin CLB2">
    <location>
        <begin position="1"/>
        <end position="492"/>
    </location>
</feature>
<feature type="domain" description="Cyclin N-terminal">
    <location>
        <begin position="208"/>
        <end position="334"/>
    </location>
</feature>
<feature type="region of interest" description="Disordered" evidence="1">
    <location>
        <begin position="1"/>
        <end position="176"/>
    </location>
</feature>
<feature type="compositionally biased region" description="Polar residues" evidence="1">
    <location>
        <begin position="23"/>
        <end position="33"/>
    </location>
</feature>
<feature type="compositionally biased region" description="Low complexity" evidence="1">
    <location>
        <begin position="34"/>
        <end position="58"/>
    </location>
</feature>
<feature type="compositionally biased region" description="Polar residues" evidence="1">
    <location>
        <begin position="59"/>
        <end position="83"/>
    </location>
</feature>
<feature type="compositionally biased region" description="Low complexity" evidence="1">
    <location>
        <begin position="111"/>
        <end position="135"/>
    </location>
</feature>